<dbReference type="EMBL" id="AE008691">
    <property type="protein sequence ID" value="AAM25305.1"/>
    <property type="molecule type" value="Genomic_DNA"/>
</dbReference>
<dbReference type="RefSeq" id="WP_009610404.1">
    <property type="nucleotide sequence ID" value="NC_003869.1"/>
</dbReference>
<dbReference type="SMR" id="Q8R880"/>
<dbReference type="STRING" id="273068.TTE2140"/>
<dbReference type="KEGG" id="tte:TTE2140"/>
<dbReference type="eggNOG" id="COG3705">
    <property type="taxonomic scope" value="Bacteria"/>
</dbReference>
<dbReference type="HOGENOM" id="CLU_025113_0_2_9"/>
<dbReference type="OrthoDB" id="9800814at2"/>
<dbReference type="UniPathway" id="UPA00031">
    <property type="reaction ID" value="UER00006"/>
</dbReference>
<dbReference type="Proteomes" id="UP000000555">
    <property type="component" value="Chromosome"/>
</dbReference>
<dbReference type="GO" id="GO:0005737">
    <property type="term" value="C:cytoplasm"/>
    <property type="evidence" value="ECO:0007669"/>
    <property type="project" value="UniProtKB-SubCell"/>
</dbReference>
<dbReference type="GO" id="GO:0140096">
    <property type="term" value="F:catalytic activity, acting on a protein"/>
    <property type="evidence" value="ECO:0007669"/>
    <property type="project" value="UniProtKB-ARBA"/>
</dbReference>
<dbReference type="GO" id="GO:0004821">
    <property type="term" value="F:histidine-tRNA ligase activity"/>
    <property type="evidence" value="ECO:0007669"/>
    <property type="project" value="TreeGrafter"/>
</dbReference>
<dbReference type="GO" id="GO:0016740">
    <property type="term" value="F:transferase activity"/>
    <property type="evidence" value="ECO:0007669"/>
    <property type="project" value="UniProtKB-ARBA"/>
</dbReference>
<dbReference type="GO" id="GO:0006427">
    <property type="term" value="P:histidyl-tRNA aminoacylation"/>
    <property type="evidence" value="ECO:0007669"/>
    <property type="project" value="TreeGrafter"/>
</dbReference>
<dbReference type="GO" id="GO:0000105">
    <property type="term" value="P:L-histidine biosynthetic process"/>
    <property type="evidence" value="ECO:0007669"/>
    <property type="project" value="UniProtKB-UniRule"/>
</dbReference>
<dbReference type="CDD" id="cd00773">
    <property type="entry name" value="HisRS-like_core"/>
    <property type="match status" value="1"/>
</dbReference>
<dbReference type="Gene3D" id="3.30.930.10">
    <property type="entry name" value="Bira Bifunctional Protein, Domain 2"/>
    <property type="match status" value="1"/>
</dbReference>
<dbReference type="HAMAP" id="MF_00125">
    <property type="entry name" value="HisZ"/>
    <property type="match status" value="1"/>
</dbReference>
<dbReference type="InterPro" id="IPR006195">
    <property type="entry name" value="aa-tRNA-synth_II"/>
</dbReference>
<dbReference type="InterPro" id="IPR045864">
    <property type="entry name" value="aa-tRNA-synth_II/BPL/LPL"/>
</dbReference>
<dbReference type="InterPro" id="IPR041715">
    <property type="entry name" value="HisRS-like_core"/>
</dbReference>
<dbReference type="InterPro" id="IPR004516">
    <property type="entry name" value="HisRS/HisZ"/>
</dbReference>
<dbReference type="InterPro" id="IPR004517">
    <property type="entry name" value="HisZ"/>
</dbReference>
<dbReference type="NCBIfam" id="TIGR00443">
    <property type="entry name" value="hisZ_biosyn_reg"/>
    <property type="match status" value="1"/>
</dbReference>
<dbReference type="PANTHER" id="PTHR43707:SF6">
    <property type="entry name" value="ATP PHOSPHORIBOSYLTRANSFERASE REGULATORY SUBUNIT"/>
    <property type="match status" value="1"/>
</dbReference>
<dbReference type="PANTHER" id="PTHR43707">
    <property type="entry name" value="HISTIDYL-TRNA SYNTHETASE"/>
    <property type="match status" value="1"/>
</dbReference>
<dbReference type="Pfam" id="PF13393">
    <property type="entry name" value="tRNA-synt_His"/>
    <property type="match status" value="1"/>
</dbReference>
<dbReference type="PIRSF" id="PIRSF001549">
    <property type="entry name" value="His-tRNA_synth"/>
    <property type="match status" value="1"/>
</dbReference>
<dbReference type="SUPFAM" id="SSF55681">
    <property type="entry name" value="Class II aaRS and biotin synthetases"/>
    <property type="match status" value="1"/>
</dbReference>
<dbReference type="PROSITE" id="PS50862">
    <property type="entry name" value="AA_TRNA_LIGASE_II"/>
    <property type="match status" value="1"/>
</dbReference>
<comment type="function">
    <text evidence="1">Required for the first step of histidine biosynthesis. May allow the feedback regulation of ATP phosphoribosyltransferase activity by histidine.</text>
</comment>
<comment type="pathway">
    <text evidence="1">Amino-acid biosynthesis; L-histidine biosynthesis; L-histidine from 5-phospho-alpha-D-ribose 1-diphosphate: step 1/9.</text>
</comment>
<comment type="subunit">
    <text evidence="1">Heteromultimer composed of HisG and HisZ subunits.</text>
</comment>
<comment type="subcellular location">
    <subcellularLocation>
        <location evidence="1">Cytoplasm</location>
    </subcellularLocation>
</comment>
<comment type="miscellaneous">
    <text>This function is generally fulfilled by the C-terminal part of HisG, which is missing in some bacteria such as this one.</text>
</comment>
<comment type="similarity">
    <text evidence="1">Belongs to the class-II aminoacyl-tRNA synthetase family. HisZ subfamily.</text>
</comment>
<organism>
    <name type="scientific">Caldanaerobacter subterraneus subsp. tengcongensis (strain DSM 15242 / JCM 11007 / NBRC 100824 / MB4)</name>
    <name type="common">Thermoanaerobacter tengcongensis</name>
    <dbReference type="NCBI Taxonomy" id="273068"/>
    <lineage>
        <taxon>Bacteria</taxon>
        <taxon>Bacillati</taxon>
        <taxon>Bacillota</taxon>
        <taxon>Clostridia</taxon>
        <taxon>Thermoanaerobacterales</taxon>
        <taxon>Thermoanaerobacteraceae</taxon>
        <taxon>Caldanaerobacter</taxon>
    </lineage>
</organism>
<sequence>MIYLPDGVQDFLPEEYEFKRNIEDKFREVFKSFGYKEIMPPTFEYSENFSHLFDENSMYRFFDKKGNILALRPDVTAQIARIVSTKLEGRYPLKLCYVANVYRYEDTQVGKMREFTQAGVELIGTNHEESDAEVIALSIEALKSTGLKDFKIDIGHAEVFGSIVRNLNLGNEDVNLLRELLEQKNQSAIEDFIKQKEIKREEAKLLRELPLLFGGEEILEKLKKENFKETEGVLEYLDRVYKILEDFGMKEYISFDLGMVQNLNYYTGIIFRGFVKGLGYAICTGGRYDKLLKIYGKDLPATGFAISVERVMLALQRQSKGEWVKPRRVLVRYKEEERRRAYEKANVLRKEGNVVEMYTFKRCENIDLKSFDEVVDVGE</sequence>
<gene>
    <name evidence="1" type="primary">hisZ</name>
    <name type="synonym">hisS2</name>
    <name type="ordered locus">TTE2140</name>
</gene>
<feature type="chain" id="PRO_0000171074" description="ATP phosphoribosyltransferase regulatory subunit">
    <location>
        <begin position="1"/>
        <end position="379"/>
    </location>
</feature>
<evidence type="ECO:0000255" key="1">
    <source>
        <dbReference type="HAMAP-Rule" id="MF_00125"/>
    </source>
</evidence>
<protein>
    <recommendedName>
        <fullName evidence="1">ATP phosphoribosyltransferase regulatory subunit</fullName>
    </recommendedName>
</protein>
<reference key="1">
    <citation type="journal article" date="2002" name="Genome Res.">
        <title>A complete sequence of the T. tengcongensis genome.</title>
        <authorList>
            <person name="Bao Q."/>
            <person name="Tian Y."/>
            <person name="Li W."/>
            <person name="Xu Z."/>
            <person name="Xuan Z."/>
            <person name="Hu S."/>
            <person name="Dong W."/>
            <person name="Yang J."/>
            <person name="Chen Y."/>
            <person name="Xue Y."/>
            <person name="Xu Y."/>
            <person name="Lai X."/>
            <person name="Huang L."/>
            <person name="Dong X."/>
            <person name="Ma Y."/>
            <person name="Ling L."/>
            <person name="Tan H."/>
            <person name="Chen R."/>
            <person name="Wang J."/>
            <person name="Yu J."/>
            <person name="Yang H."/>
        </authorList>
    </citation>
    <scope>NUCLEOTIDE SEQUENCE [LARGE SCALE GENOMIC DNA]</scope>
    <source>
        <strain>DSM 15242 / JCM 11007 / NBRC 100824 / MB4</strain>
    </source>
</reference>
<name>HISZ_CALS4</name>
<accession>Q8R880</accession>
<keyword id="KW-0028">Amino-acid biosynthesis</keyword>
<keyword id="KW-0963">Cytoplasm</keyword>
<keyword id="KW-0368">Histidine biosynthesis</keyword>
<keyword id="KW-1185">Reference proteome</keyword>
<proteinExistence type="inferred from homology"/>